<name>TITF1_CAVPO</name>
<accession>P97273</accession>
<gene>
    <name type="primary">TITF1</name>
    <name type="synonym">TTF1</name>
</gene>
<feature type="chain" id="PRO_0000049342" description="Thyroid transcription factor 1">
    <location>
        <begin position="1" status="less than"/>
        <end position="112" status="greater than"/>
    </location>
</feature>
<feature type="DNA-binding region" description="Homeobox" evidence="2">
    <location>
        <begin position="1"/>
        <end position="60"/>
    </location>
</feature>
<feature type="region of interest" description="Disordered" evidence="3">
    <location>
        <begin position="59"/>
        <end position="100"/>
    </location>
</feature>
<feature type="compositionally biased region" description="Gly residues" evidence="3">
    <location>
        <begin position="73"/>
        <end position="83"/>
    </location>
</feature>
<feature type="compositionally biased region" description="Low complexity" evidence="3">
    <location>
        <begin position="84"/>
        <end position="93"/>
    </location>
</feature>
<feature type="non-terminal residue">
    <location>
        <position position="1"/>
    </location>
</feature>
<feature type="non-terminal residue">
    <location>
        <position position="112"/>
    </location>
</feature>
<organism>
    <name type="scientific">Cavia porcellus</name>
    <name type="common">Guinea pig</name>
    <dbReference type="NCBI Taxonomy" id="10141"/>
    <lineage>
        <taxon>Eukaryota</taxon>
        <taxon>Metazoa</taxon>
        <taxon>Chordata</taxon>
        <taxon>Craniata</taxon>
        <taxon>Vertebrata</taxon>
        <taxon>Euteleostomi</taxon>
        <taxon>Mammalia</taxon>
        <taxon>Eutheria</taxon>
        <taxon>Euarchontoglires</taxon>
        <taxon>Glires</taxon>
        <taxon>Rodentia</taxon>
        <taxon>Hystricomorpha</taxon>
        <taxon>Caviidae</taxon>
        <taxon>Cavia</taxon>
    </lineage>
</organism>
<proteinExistence type="evidence at transcript level"/>
<comment type="function">
    <text evidence="1">Transcription factor that binds and activates the promoter of thyroid specific genes such as thyroglobulin, thyroperoxidase, and thyrotropin receptor. Crucial in the maintenance of the thyroid differentiation phenotype. May play a role in lung development and surfactant homeostasis (By similarity).</text>
</comment>
<comment type="subcellular location">
    <subcellularLocation>
        <location>Nucleus</location>
    </subcellularLocation>
</comment>
<comment type="PTM">
    <text evidence="1">Phosphorylated on serine residues.</text>
</comment>
<comment type="similarity">
    <text evidence="4">Belongs to the NK-2 homeobox family.</text>
</comment>
<keyword id="KW-0010">Activator</keyword>
<keyword id="KW-0238">DNA-binding</keyword>
<keyword id="KW-0371">Homeobox</keyword>
<keyword id="KW-0539">Nucleus</keyword>
<keyword id="KW-0597">Phosphoprotein</keyword>
<keyword id="KW-1185">Reference proteome</keyword>
<keyword id="KW-0804">Transcription</keyword>
<keyword id="KW-0805">Transcription regulation</keyword>
<dbReference type="EMBL" id="U82718">
    <property type="protein sequence ID" value="AAB40921.1"/>
    <property type="molecule type" value="mRNA"/>
</dbReference>
<dbReference type="BMRB" id="P97273"/>
<dbReference type="SMR" id="P97273"/>
<dbReference type="STRING" id="10141.ENSCPOP00000019607"/>
<dbReference type="eggNOG" id="KOG0842">
    <property type="taxonomic scope" value="Eukaryota"/>
</dbReference>
<dbReference type="InParanoid" id="P97273"/>
<dbReference type="Proteomes" id="UP000005447">
    <property type="component" value="Unassembled WGS sequence"/>
</dbReference>
<dbReference type="GO" id="GO:0005654">
    <property type="term" value="C:nucleoplasm"/>
    <property type="evidence" value="ECO:0000250"/>
    <property type="project" value="UniProtKB"/>
</dbReference>
<dbReference type="GO" id="GO:0000981">
    <property type="term" value="F:DNA-binding transcription factor activity, RNA polymerase II-specific"/>
    <property type="evidence" value="ECO:0007669"/>
    <property type="project" value="InterPro"/>
</dbReference>
<dbReference type="GO" id="GO:0000978">
    <property type="term" value="F:RNA polymerase II cis-regulatory region sequence-specific DNA binding"/>
    <property type="evidence" value="ECO:0007669"/>
    <property type="project" value="TreeGrafter"/>
</dbReference>
<dbReference type="GO" id="GO:0030154">
    <property type="term" value="P:cell differentiation"/>
    <property type="evidence" value="ECO:0007669"/>
    <property type="project" value="TreeGrafter"/>
</dbReference>
<dbReference type="GO" id="GO:0045893">
    <property type="term" value="P:positive regulation of DNA-templated transcription"/>
    <property type="evidence" value="ECO:0000250"/>
    <property type="project" value="UniProtKB"/>
</dbReference>
<dbReference type="CDD" id="cd00086">
    <property type="entry name" value="homeodomain"/>
    <property type="match status" value="1"/>
</dbReference>
<dbReference type="FunFam" id="1.10.10.60:FF:000108">
    <property type="entry name" value="NK2 homeobox 1"/>
    <property type="match status" value="1"/>
</dbReference>
<dbReference type="Gene3D" id="1.10.10.60">
    <property type="entry name" value="Homeodomain-like"/>
    <property type="match status" value="1"/>
</dbReference>
<dbReference type="InterPro" id="IPR001356">
    <property type="entry name" value="HD"/>
</dbReference>
<dbReference type="InterPro" id="IPR020479">
    <property type="entry name" value="HD_metazoa"/>
</dbReference>
<dbReference type="InterPro" id="IPR017970">
    <property type="entry name" value="Homeobox_CS"/>
</dbReference>
<dbReference type="InterPro" id="IPR050394">
    <property type="entry name" value="Homeobox_NK-like"/>
</dbReference>
<dbReference type="InterPro" id="IPR009057">
    <property type="entry name" value="Homeodomain-like_sf"/>
</dbReference>
<dbReference type="PANTHER" id="PTHR24340">
    <property type="entry name" value="HOMEOBOX PROTEIN NKX"/>
    <property type="match status" value="1"/>
</dbReference>
<dbReference type="PANTHER" id="PTHR24340:SF33">
    <property type="entry name" value="HOMEOBOX PROTEIN NKX-2.1"/>
    <property type="match status" value="1"/>
</dbReference>
<dbReference type="Pfam" id="PF00046">
    <property type="entry name" value="Homeodomain"/>
    <property type="match status" value="1"/>
</dbReference>
<dbReference type="PRINTS" id="PR00024">
    <property type="entry name" value="HOMEOBOX"/>
</dbReference>
<dbReference type="SMART" id="SM00389">
    <property type="entry name" value="HOX"/>
    <property type="match status" value="1"/>
</dbReference>
<dbReference type="SUPFAM" id="SSF46689">
    <property type="entry name" value="Homeodomain-like"/>
    <property type="match status" value="1"/>
</dbReference>
<dbReference type="PROSITE" id="PS00027">
    <property type="entry name" value="HOMEOBOX_1"/>
    <property type="match status" value="1"/>
</dbReference>
<dbReference type="PROSITE" id="PS50071">
    <property type="entry name" value="HOMEOBOX_2"/>
    <property type="match status" value="1"/>
</dbReference>
<reference key="1">
    <citation type="submission" date="1996-12" db="EMBL/GenBank/DDBJ databases">
        <authorList>
            <person name="Yuan H.T."/>
            <person name="Bingle C.D."/>
        </authorList>
    </citation>
    <scope>NUCLEOTIDE SEQUENCE [MRNA]</scope>
    <source>
        <strain>Dunkin-Hartley</strain>
        <tissue>Lung</tissue>
    </source>
</reference>
<protein>
    <recommendedName>
        <fullName>Thyroid transcription factor 1</fullName>
        <shortName>TTF-1</shortName>
    </recommendedName>
    <alternativeName>
        <fullName>Homeobox protein Nkx-2.1</fullName>
    </alternativeName>
    <alternativeName>
        <fullName>Thyroid nuclear factor 1</fullName>
    </alternativeName>
</protein>
<sequence>RRNRRVLFSQAQVYELERRFKQQKYLSAPEREHLASMIHLTPTQVKIWFQNHRYKMKRQAKDKAAQQQLQQDSGGGGGGGGAGCPQQQQAQQQSPRRVAVPVLVKDGKPCPA</sequence>
<evidence type="ECO:0000250" key="1"/>
<evidence type="ECO:0000255" key="2">
    <source>
        <dbReference type="PROSITE-ProRule" id="PRU00108"/>
    </source>
</evidence>
<evidence type="ECO:0000256" key="3">
    <source>
        <dbReference type="SAM" id="MobiDB-lite"/>
    </source>
</evidence>
<evidence type="ECO:0000305" key="4"/>